<sequence length="750" mass="85313">MFVLLMLALVMLFIVQSSTNVIALWTNNVFQFSLILIPLVTLLAGSITADIFIEGYNNGIELFLFSKPISRDRILLIKLLVLLMYLSIVAVLSTAVVSLGYFTRNEIESYLDDLALSIFVGTILNGIIFSAVTIMLATRFSNIQSLIILLLFVSLFSFSSPIARLIFDTPAKTLSQQGYSVRQINGIAHSESPNVERKIYVSVKKRRLTGVDREEKELWKSDEQAALRGRNLYEEAQRTSSYINSFYTNIGYLFGSLYRLGALADENNFDASVATQNTKIRFGKLVDLDKSTDIIGYRTKDRFGRFFRFHLRFPTLNFKQSLSNSGVFFINKRGLVKATFSAGDDAFKRDPKIMQKVFDTFLESFSWFLDKKINRRIARIYAESDNKGSPFPKEGDDENTKGDDNSSEKTDTVSVSTKLKTTADQSESTQMSSESTATGISSDPQSQGKMNNKSEEQKKKEKELTWQIYRDIKFLNSIYFLQVNNERLWDNVAFLNKVNAEDQNGDKNQFAQAMASLNKQINMFYVLNEITNKEHNLPTKYGAYSDQLKKVINENFEKIENKKKEIEEKQNKEFQENKNGASNNQDTKQDAQKGDTNTQSTELKARQAQQVQKDQQNDSKGNTATNSDTGKSDNKTDTTEDEQNTYKPLTAREKKTKIKELTKDIFFSTAQNYLFLVQGGYNNKLFAGGLPELHQRFLSDVVVDFSEEKLVYEVQGEPIVSSVATIVITLFLTVVLLAIAFFFFKYRNVK</sequence>
<proteinExistence type="predicted"/>
<name>Y333_MYCPN</name>
<gene>
    <name type="ordered locus">MPN_333</name>
    <name type="ORF">F10_orf750</name>
    <name type="ORF">MP503</name>
</gene>
<protein>
    <recommendedName>
        <fullName>Uncharacterized protein MPN_333</fullName>
    </recommendedName>
</protein>
<reference key="1">
    <citation type="journal article" date="1996" name="Nucleic Acids Res.">
        <title>Complete sequence analysis of the genome of the bacterium Mycoplasma pneumoniae.</title>
        <authorList>
            <person name="Himmelreich R."/>
            <person name="Hilbert H."/>
            <person name="Plagens H."/>
            <person name="Pirkl E."/>
            <person name="Li B.-C."/>
            <person name="Herrmann R."/>
        </authorList>
    </citation>
    <scope>NUCLEOTIDE SEQUENCE [LARGE SCALE GENOMIC DNA]</scope>
    <source>
        <strain>ATCC 29342 / M129 / Subtype 1</strain>
    </source>
</reference>
<evidence type="ECO:0000255" key="1"/>
<evidence type="ECO:0000256" key="2">
    <source>
        <dbReference type="SAM" id="MobiDB-lite"/>
    </source>
</evidence>
<evidence type="ECO:0000305" key="3"/>
<organism>
    <name type="scientific">Mycoplasma pneumoniae (strain ATCC 29342 / M129 / Subtype 1)</name>
    <name type="common">Mycoplasmoides pneumoniae</name>
    <dbReference type="NCBI Taxonomy" id="272634"/>
    <lineage>
        <taxon>Bacteria</taxon>
        <taxon>Bacillati</taxon>
        <taxon>Mycoplasmatota</taxon>
        <taxon>Mycoplasmoidales</taxon>
        <taxon>Mycoplasmoidaceae</taxon>
        <taxon>Mycoplasmoides</taxon>
    </lineage>
</organism>
<dbReference type="EMBL" id="U00089">
    <property type="protein sequence ID" value="AAB96151.1"/>
    <property type="molecule type" value="Genomic_DNA"/>
</dbReference>
<dbReference type="PIR" id="S73829">
    <property type="entry name" value="S73829"/>
</dbReference>
<dbReference type="RefSeq" id="NP_110021.1">
    <property type="nucleotide sequence ID" value="NC_000912.1"/>
</dbReference>
<dbReference type="RefSeq" id="WP_010874689.1">
    <property type="nucleotide sequence ID" value="NZ_OU342337.1"/>
</dbReference>
<dbReference type="STRING" id="272634.MPN_333"/>
<dbReference type="EnsemblBacteria" id="AAB96151">
    <property type="protein sequence ID" value="AAB96151"/>
    <property type="gene ID" value="MPN_333"/>
</dbReference>
<dbReference type="KEGG" id="mpn:MPN_333"/>
<dbReference type="PATRIC" id="fig|272634.6.peg.357"/>
<dbReference type="HOGENOM" id="CLU_357821_0_0_14"/>
<dbReference type="BioCyc" id="MPNE272634:G1GJ3-526-MONOMER"/>
<dbReference type="Proteomes" id="UP000000808">
    <property type="component" value="Chromosome"/>
</dbReference>
<dbReference type="GO" id="GO:0005886">
    <property type="term" value="C:plasma membrane"/>
    <property type="evidence" value="ECO:0007669"/>
    <property type="project" value="UniProtKB-SubCell"/>
</dbReference>
<dbReference type="GO" id="GO:0140359">
    <property type="term" value="F:ABC-type transporter activity"/>
    <property type="evidence" value="ECO:0007669"/>
    <property type="project" value="InterPro"/>
</dbReference>
<dbReference type="InterPro" id="IPR032688">
    <property type="entry name" value="ABC2_NosY/YtrC-like"/>
</dbReference>
<dbReference type="Pfam" id="PF12679">
    <property type="entry name" value="ABC2_membrane_2"/>
    <property type="match status" value="1"/>
</dbReference>
<feature type="chain" id="PRO_0000210661" description="Uncharacterized protein MPN_333">
    <location>
        <begin position="1"/>
        <end position="750"/>
    </location>
</feature>
<feature type="transmembrane region" description="Helical" evidence="1">
    <location>
        <begin position="2"/>
        <end position="22"/>
    </location>
</feature>
<feature type="transmembrane region" description="Helical" evidence="1">
    <location>
        <begin position="33"/>
        <end position="53"/>
    </location>
</feature>
<feature type="transmembrane region" description="Helical" evidence="1">
    <location>
        <begin position="79"/>
        <end position="99"/>
    </location>
</feature>
<feature type="transmembrane region" description="Helical" evidence="1">
    <location>
        <begin position="116"/>
        <end position="136"/>
    </location>
</feature>
<feature type="transmembrane region" description="Helical" evidence="1">
    <location>
        <begin position="143"/>
        <end position="163"/>
    </location>
</feature>
<feature type="transmembrane region" description="Helical" evidence="1">
    <location>
        <begin position="724"/>
        <end position="744"/>
    </location>
</feature>
<feature type="region of interest" description="Disordered" evidence="2">
    <location>
        <begin position="385"/>
        <end position="461"/>
    </location>
</feature>
<feature type="region of interest" description="Disordered" evidence="2">
    <location>
        <begin position="571"/>
        <end position="651"/>
    </location>
</feature>
<feature type="compositionally biased region" description="Basic and acidic residues" evidence="2">
    <location>
        <begin position="398"/>
        <end position="411"/>
    </location>
</feature>
<feature type="compositionally biased region" description="Polar residues" evidence="2">
    <location>
        <begin position="412"/>
        <end position="424"/>
    </location>
</feature>
<feature type="compositionally biased region" description="Low complexity" evidence="2">
    <location>
        <begin position="425"/>
        <end position="436"/>
    </location>
</feature>
<feature type="compositionally biased region" description="Polar residues" evidence="2">
    <location>
        <begin position="437"/>
        <end position="451"/>
    </location>
</feature>
<feature type="compositionally biased region" description="Basic and acidic residues" evidence="2">
    <location>
        <begin position="452"/>
        <end position="461"/>
    </location>
</feature>
<feature type="compositionally biased region" description="Polar residues" evidence="2">
    <location>
        <begin position="618"/>
        <end position="629"/>
    </location>
</feature>
<accession>P75445</accession>
<comment type="subcellular location">
    <subcellularLocation>
        <location evidence="3">Cell membrane</location>
        <topology evidence="3">Multi-pass membrane protein</topology>
    </subcellularLocation>
</comment>
<comment type="similarity">
    <text evidence="3">To M.pneumoniae MPN_335.</text>
</comment>
<keyword id="KW-1003">Cell membrane</keyword>
<keyword id="KW-0472">Membrane</keyword>
<keyword id="KW-1185">Reference proteome</keyword>
<keyword id="KW-0812">Transmembrane</keyword>
<keyword id="KW-1133">Transmembrane helix</keyword>